<accession>P67397</accession>
<accession>P58999</accession>
<accession>Q99SE6</accession>
<reference key="1">
    <citation type="journal article" date="2002" name="Lancet">
        <title>Genome and virulence determinants of high virulence community-acquired MRSA.</title>
        <authorList>
            <person name="Baba T."/>
            <person name="Takeuchi F."/>
            <person name="Kuroda M."/>
            <person name="Yuzawa H."/>
            <person name="Aoki K."/>
            <person name="Oguchi A."/>
            <person name="Nagai Y."/>
            <person name="Iwama N."/>
            <person name="Asano K."/>
            <person name="Naimi T."/>
            <person name="Kuroda H."/>
            <person name="Cui L."/>
            <person name="Yamamoto K."/>
            <person name="Hiramatsu K."/>
        </authorList>
    </citation>
    <scope>NUCLEOTIDE SEQUENCE [LARGE SCALE GENOMIC DNA]</scope>
    <source>
        <strain>MW2</strain>
    </source>
</reference>
<feature type="chain" id="PRO_0000120884" description="Uracil phosphoribosyltransferase">
    <location>
        <begin position="1"/>
        <end position="209"/>
    </location>
</feature>
<feature type="binding site" evidence="1">
    <location>
        <position position="79"/>
    </location>
    <ligand>
        <name>5-phospho-alpha-D-ribose 1-diphosphate</name>
        <dbReference type="ChEBI" id="CHEBI:58017"/>
    </ligand>
</feature>
<feature type="binding site" evidence="1">
    <location>
        <position position="104"/>
    </location>
    <ligand>
        <name>5-phospho-alpha-D-ribose 1-diphosphate</name>
        <dbReference type="ChEBI" id="CHEBI:58017"/>
    </ligand>
</feature>
<feature type="binding site" evidence="1">
    <location>
        <begin position="131"/>
        <end position="139"/>
    </location>
    <ligand>
        <name>5-phospho-alpha-D-ribose 1-diphosphate</name>
        <dbReference type="ChEBI" id="CHEBI:58017"/>
    </ligand>
</feature>
<feature type="binding site" evidence="1">
    <location>
        <position position="194"/>
    </location>
    <ligand>
        <name>uracil</name>
        <dbReference type="ChEBI" id="CHEBI:17568"/>
    </ligand>
</feature>
<feature type="binding site" evidence="1">
    <location>
        <begin position="199"/>
        <end position="201"/>
    </location>
    <ligand>
        <name>uracil</name>
        <dbReference type="ChEBI" id="CHEBI:17568"/>
    </ligand>
</feature>
<feature type="binding site" evidence="1">
    <location>
        <position position="200"/>
    </location>
    <ligand>
        <name>5-phospho-alpha-D-ribose 1-diphosphate</name>
        <dbReference type="ChEBI" id="CHEBI:58017"/>
    </ligand>
</feature>
<keyword id="KW-0021">Allosteric enzyme</keyword>
<keyword id="KW-0328">Glycosyltransferase</keyword>
<keyword id="KW-0342">GTP-binding</keyword>
<keyword id="KW-0460">Magnesium</keyword>
<keyword id="KW-0547">Nucleotide-binding</keyword>
<keyword id="KW-0808">Transferase</keyword>
<gene>
    <name evidence="1" type="primary">upp</name>
    <name type="ordered locus">MW2036</name>
</gene>
<protein>
    <recommendedName>
        <fullName evidence="1">Uracil phosphoribosyltransferase</fullName>
        <ecNumber evidence="1">2.4.2.9</ecNumber>
    </recommendedName>
    <alternativeName>
        <fullName evidence="1">UMP pyrophosphorylase</fullName>
    </alternativeName>
    <alternativeName>
        <fullName evidence="1">UPRTase</fullName>
    </alternativeName>
</protein>
<name>UPP_STAAW</name>
<dbReference type="EC" id="2.4.2.9" evidence="1"/>
<dbReference type="EMBL" id="BA000033">
    <property type="protein sequence ID" value="BAB95901.1"/>
    <property type="molecule type" value="Genomic_DNA"/>
</dbReference>
<dbReference type="RefSeq" id="WP_000048712.1">
    <property type="nucleotide sequence ID" value="NC_003923.1"/>
</dbReference>
<dbReference type="SMR" id="P67397"/>
<dbReference type="KEGG" id="sam:MW2036"/>
<dbReference type="HOGENOM" id="CLU_067096_2_2_9"/>
<dbReference type="UniPathway" id="UPA00574">
    <property type="reaction ID" value="UER00636"/>
</dbReference>
<dbReference type="GO" id="GO:0005525">
    <property type="term" value="F:GTP binding"/>
    <property type="evidence" value="ECO:0007669"/>
    <property type="project" value="UniProtKB-KW"/>
</dbReference>
<dbReference type="GO" id="GO:0000287">
    <property type="term" value="F:magnesium ion binding"/>
    <property type="evidence" value="ECO:0007669"/>
    <property type="project" value="UniProtKB-UniRule"/>
</dbReference>
<dbReference type="GO" id="GO:0004845">
    <property type="term" value="F:uracil phosphoribosyltransferase activity"/>
    <property type="evidence" value="ECO:0007669"/>
    <property type="project" value="UniProtKB-UniRule"/>
</dbReference>
<dbReference type="GO" id="GO:0044206">
    <property type="term" value="P:UMP salvage"/>
    <property type="evidence" value="ECO:0007669"/>
    <property type="project" value="UniProtKB-UniRule"/>
</dbReference>
<dbReference type="GO" id="GO:0006223">
    <property type="term" value="P:uracil salvage"/>
    <property type="evidence" value="ECO:0007669"/>
    <property type="project" value="InterPro"/>
</dbReference>
<dbReference type="CDD" id="cd06223">
    <property type="entry name" value="PRTases_typeI"/>
    <property type="match status" value="1"/>
</dbReference>
<dbReference type="FunFam" id="3.40.50.2020:FF:000003">
    <property type="entry name" value="Uracil phosphoribosyltransferase"/>
    <property type="match status" value="1"/>
</dbReference>
<dbReference type="Gene3D" id="3.40.50.2020">
    <property type="match status" value="1"/>
</dbReference>
<dbReference type="HAMAP" id="MF_01218_B">
    <property type="entry name" value="Upp_B"/>
    <property type="match status" value="1"/>
</dbReference>
<dbReference type="InterPro" id="IPR000836">
    <property type="entry name" value="PRibTrfase_dom"/>
</dbReference>
<dbReference type="InterPro" id="IPR029057">
    <property type="entry name" value="PRTase-like"/>
</dbReference>
<dbReference type="InterPro" id="IPR034332">
    <property type="entry name" value="Upp_B"/>
</dbReference>
<dbReference type="InterPro" id="IPR050054">
    <property type="entry name" value="UPRTase/APRTase"/>
</dbReference>
<dbReference type="InterPro" id="IPR005765">
    <property type="entry name" value="Ura_phspho_trans"/>
</dbReference>
<dbReference type="NCBIfam" id="NF001097">
    <property type="entry name" value="PRK00129.1"/>
    <property type="match status" value="1"/>
</dbReference>
<dbReference type="NCBIfam" id="TIGR01091">
    <property type="entry name" value="upp"/>
    <property type="match status" value="1"/>
</dbReference>
<dbReference type="PANTHER" id="PTHR32315">
    <property type="entry name" value="ADENINE PHOSPHORIBOSYLTRANSFERASE"/>
    <property type="match status" value="1"/>
</dbReference>
<dbReference type="PANTHER" id="PTHR32315:SF4">
    <property type="entry name" value="URACIL PHOSPHORIBOSYLTRANSFERASE, CHLOROPLASTIC"/>
    <property type="match status" value="1"/>
</dbReference>
<dbReference type="Pfam" id="PF14681">
    <property type="entry name" value="UPRTase"/>
    <property type="match status" value="1"/>
</dbReference>
<dbReference type="SUPFAM" id="SSF53271">
    <property type="entry name" value="PRTase-like"/>
    <property type="match status" value="1"/>
</dbReference>
<evidence type="ECO:0000255" key="1">
    <source>
        <dbReference type="HAMAP-Rule" id="MF_01218"/>
    </source>
</evidence>
<proteinExistence type="inferred from homology"/>
<organism>
    <name type="scientific">Staphylococcus aureus (strain MW2)</name>
    <dbReference type="NCBI Taxonomy" id="196620"/>
    <lineage>
        <taxon>Bacteria</taxon>
        <taxon>Bacillati</taxon>
        <taxon>Bacillota</taxon>
        <taxon>Bacilli</taxon>
        <taxon>Bacillales</taxon>
        <taxon>Staphylococcaceae</taxon>
        <taxon>Staphylococcus</taxon>
    </lineage>
</organism>
<comment type="function">
    <text evidence="1">Catalyzes the conversion of uracil and 5-phospho-alpha-D-ribose 1-diphosphate (PRPP) to UMP and diphosphate.</text>
</comment>
<comment type="catalytic activity">
    <reaction evidence="1">
        <text>UMP + diphosphate = 5-phospho-alpha-D-ribose 1-diphosphate + uracil</text>
        <dbReference type="Rhea" id="RHEA:13017"/>
        <dbReference type="ChEBI" id="CHEBI:17568"/>
        <dbReference type="ChEBI" id="CHEBI:33019"/>
        <dbReference type="ChEBI" id="CHEBI:57865"/>
        <dbReference type="ChEBI" id="CHEBI:58017"/>
        <dbReference type="EC" id="2.4.2.9"/>
    </reaction>
</comment>
<comment type="cofactor">
    <cofactor evidence="1">
        <name>Mg(2+)</name>
        <dbReference type="ChEBI" id="CHEBI:18420"/>
    </cofactor>
    <text evidence="1">Binds 1 Mg(2+) ion per subunit. The magnesium is bound as Mg-PRPP.</text>
</comment>
<comment type="activity regulation">
    <text evidence="1">Allosterically activated by GTP.</text>
</comment>
<comment type="pathway">
    <text evidence="1">Pyrimidine metabolism; UMP biosynthesis via salvage pathway; UMP from uracil: step 1/1.</text>
</comment>
<comment type="similarity">
    <text evidence="1">Belongs to the UPRTase family.</text>
</comment>
<sequence>MSKVHVFDHPLIQHKLSYIRDVNTGTKEFRELVDEVGMLMAYEVTRDLELQDVDIETPVTKMTAKRLAGKKLAIVPILRAGLGMTDGILSLVPAARVGHIGLYRDPETLKAVEYFAKLPQDITERQIIVVDPMLATGASAIEAITSLKKRGAKNIRFMCLIAAPEGVEKMHEAHPDVDIYIAALDEKLNDKAYITPGLGDAGDRLFGTK</sequence>